<proteinExistence type="inferred from homology"/>
<dbReference type="EC" id="1.1.99.1" evidence="1"/>
<dbReference type="EC" id="1.2.1.8" evidence="1"/>
<dbReference type="EMBL" id="CP000046">
    <property type="protein sequence ID" value="AAW38626.1"/>
    <property type="molecule type" value="Genomic_DNA"/>
</dbReference>
<dbReference type="RefSeq" id="WP_000066521.1">
    <property type="nucleotide sequence ID" value="NZ_JBGOFO010000001.1"/>
</dbReference>
<dbReference type="SMR" id="Q5HCU1"/>
<dbReference type="KEGG" id="sac:SACOL2627"/>
<dbReference type="HOGENOM" id="CLU_002865_7_1_9"/>
<dbReference type="UniPathway" id="UPA00529">
    <property type="reaction ID" value="UER00385"/>
</dbReference>
<dbReference type="Proteomes" id="UP000000530">
    <property type="component" value="Chromosome"/>
</dbReference>
<dbReference type="GO" id="GO:0016020">
    <property type="term" value="C:membrane"/>
    <property type="evidence" value="ECO:0007669"/>
    <property type="project" value="TreeGrafter"/>
</dbReference>
<dbReference type="GO" id="GO:0008802">
    <property type="term" value="F:betaine-aldehyde dehydrogenase (NAD+) activity"/>
    <property type="evidence" value="ECO:0007669"/>
    <property type="project" value="UniProtKB-EC"/>
</dbReference>
<dbReference type="GO" id="GO:0008812">
    <property type="term" value="F:choline dehydrogenase activity"/>
    <property type="evidence" value="ECO:0007669"/>
    <property type="project" value="UniProtKB-UniRule"/>
</dbReference>
<dbReference type="GO" id="GO:0050660">
    <property type="term" value="F:flavin adenine dinucleotide binding"/>
    <property type="evidence" value="ECO:0007669"/>
    <property type="project" value="InterPro"/>
</dbReference>
<dbReference type="GO" id="GO:0019285">
    <property type="term" value="P:glycine betaine biosynthetic process from choline"/>
    <property type="evidence" value="ECO:0007669"/>
    <property type="project" value="UniProtKB-UniRule"/>
</dbReference>
<dbReference type="Gene3D" id="3.50.50.60">
    <property type="entry name" value="FAD/NAD(P)-binding domain"/>
    <property type="match status" value="1"/>
</dbReference>
<dbReference type="Gene3D" id="3.30.560.10">
    <property type="entry name" value="Glucose Oxidase, domain 3"/>
    <property type="match status" value="1"/>
</dbReference>
<dbReference type="HAMAP" id="MF_00750">
    <property type="entry name" value="Choline_dehydrogen"/>
    <property type="match status" value="1"/>
</dbReference>
<dbReference type="InterPro" id="IPR011533">
    <property type="entry name" value="BetA"/>
</dbReference>
<dbReference type="InterPro" id="IPR036188">
    <property type="entry name" value="FAD/NAD-bd_sf"/>
</dbReference>
<dbReference type="InterPro" id="IPR012132">
    <property type="entry name" value="GMC_OxRdtase"/>
</dbReference>
<dbReference type="InterPro" id="IPR000172">
    <property type="entry name" value="GMC_OxRdtase_N"/>
</dbReference>
<dbReference type="InterPro" id="IPR007867">
    <property type="entry name" value="GMC_OxRtase_C"/>
</dbReference>
<dbReference type="NCBIfam" id="TIGR01810">
    <property type="entry name" value="betA"/>
    <property type="match status" value="1"/>
</dbReference>
<dbReference type="NCBIfam" id="NF002550">
    <property type="entry name" value="PRK02106.1"/>
    <property type="match status" value="1"/>
</dbReference>
<dbReference type="PANTHER" id="PTHR11552:SF147">
    <property type="entry name" value="CHOLINE DEHYDROGENASE, MITOCHONDRIAL"/>
    <property type="match status" value="1"/>
</dbReference>
<dbReference type="PANTHER" id="PTHR11552">
    <property type="entry name" value="GLUCOSE-METHANOL-CHOLINE GMC OXIDOREDUCTASE"/>
    <property type="match status" value="1"/>
</dbReference>
<dbReference type="Pfam" id="PF05199">
    <property type="entry name" value="GMC_oxred_C"/>
    <property type="match status" value="1"/>
</dbReference>
<dbReference type="Pfam" id="PF00732">
    <property type="entry name" value="GMC_oxred_N"/>
    <property type="match status" value="1"/>
</dbReference>
<dbReference type="PIRSF" id="PIRSF000137">
    <property type="entry name" value="Alcohol_oxidase"/>
    <property type="match status" value="1"/>
</dbReference>
<dbReference type="SUPFAM" id="SSF54373">
    <property type="entry name" value="FAD-linked reductases, C-terminal domain"/>
    <property type="match status" value="1"/>
</dbReference>
<dbReference type="SUPFAM" id="SSF51905">
    <property type="entry name" value="FAD/NAD(P)-binding domain"/>
    <property type="match status" value="1"/>
</dbReference>
<dbReference type="PROSITE" id="PS00623">
    <property type="entry name" value="GMC_OXRED_1"/>
    <property type="match status" value="1"/>
</dbReference>
<dbReference type="PROSITE" id="PS00624">
    <property type="entry name" value="GMC_OXRED_2"/>
    <property type="match status" value="1"/>
</dbReference>
<reference key="1">
    <citation type="journal article" date="2005" name="J. Bacteriol.">
        <title>Insights on evolution of virulence and resistance from the complete genome analysis of an early methicillin-resistant Staphylococcus aureus strain and a biofilm-producing methicillin-resistant Staphylococcus epidermidis strain.</title>
        <authorList>
            <person name="Gill S.R."/>
            <person name="Fouts D.E."/>
            <person name="Archer G.L."/>
            <person name="Mongodin E.F."/>
            <person name="DeBoy R.T."/>
            <person name="Ravel J."/>
            <person name="Paulsen I.T."/>
            <person name="Kolonay J.F."/>
            <person name="Brinkac L.M."/>
            <person name="Beanan M.J."/>
            <person name="Dodson R.J."/>
            <person name="Daugherty S.C."/>
            <person name="Madupu R."/>
            <person name="Angiuoli S.V."/>
            <person name="Durkin A.S."/>
            <person name="Haft D.H."/>
            <person name="Vamathevan J.J."/>
            <person name="Khouri H."/>
            <person name="Utterback T.R."/>
            <person name="Lee C."/>
            <person name="Dimitrov G."/>
            <person name="Jiang L."/>
            <person name="Qin H."/>
            <person name="Weidman J."/>
            <person name="Tran K."/>
            <person name="Kang K.H."/>
            <person name="Hance I.R."/>
            <person name="Nelson K.E."/>
            <person name="Fraser C.M."/>
        </authorList>
    </citation>
    <scope>NUCLEOTIDE SEQUENCE [LARGE SCALE GENOMIC DNA]</scope>
    <source>
        <strain>COL</strain>
    </source>
</reference>
<protein>
    <recommendedName>
        <fullName evidence="1">Oxygen-dependent choline dehydrogenase</fullName>
        <shortName evidence="1">CDH</shortName>
        <shortName evidence="1">CHD</shortName>
        <ecNumber evidence="1">1.1.99.1</ecNumber>
    </recommendedName>
    <alternativeName>
        <fullName evidence="1">Betaine aldehyde dehydrogenase</fullName>
        <shortName evidence="1">BADH</shortName>
        <ecNumber evidence="1">1.2.1.8</ecNumber>
    </alternativeName>
</protein>
<keyword id="KW-0274">FAD</keyword>
<keyword id="KW-0285">Flavoprotein</keyword>
<keyword id="KW-0520">NAD</keyword>
<keyword id="KW-0560">Oxidoreductase</keyword>
<comment type="function">
    <text evidence="1">Involved in the biosynthesis of the osmoprotectant glycine betaine. Catalyzes the oxidation of choline to betaine aldehyde and betaine aldehyde to glycine betaine at the same rate.</text>
</comment>
<comment type="catalytic activity">
    <reaction evidence="1">
        <text>choline + A = betaine aldehyde + AH2</text>
        <dbReference type="Rhea" id="RHEA:17433"/>
        <dbReference type="ChEBI" id="CHEBI:13193"/>
        <dbReference type="ChEBI" id="CHEBI:15354"/>
        <dbReference type="ChEBI" id="CHEBI:15710"/>
        <dbReference type="ChEBI" id="CHEBI:17499"/>
        <dbReference type="EC" id="1.1.99.1"/>
    </reaction>
</comment>
<comment type="catalytic activity">
    <reaction evidence="1">
        <text>betaine aldehyde + NAD(+) + H2O = glycine betaine + NADH + 2 H(+)</text>
        <dbReference type="Rhea" id="RHEA:15305"/>
        <dbReference type="ChEBI" id="CHEBI:15377"/>
        <dbReference type="ChEBI" id="CHEBI:15378"/>
        <dbReference type="ChEBI" id="CHEBI:15710"/>
        <dbReference type="ChEBI" id="CHEBI:17750"/>
        <dbReference type="ChEBI" id="CHEBI:57540"/>
        <dbReference type="ChEBI" id="CHEBI:57945"/>
        <dbReference type="EC" id="1.2.1.8"/>
    </reaction>
</comment>
<comment type="cofactor">
    <cofactor evidence="1">
        <name>FAD</name>
        <dbReference type="ChEBI" id="CHEBI:57692"/>
    </cofactor>
</comment>
<comment type="pathway">
    <text evidence="1">Amine and polyamine biosynthesis; betaine biosynthesis via choline pathway; betaine aldehyde from choline (cytochrome c reductase route): step 1/1.</text>
</comment>
<comment type="similarity">
    <text evidence="1">Belongs to the GMC oxidoreductase family.</text>
</comment>
<evidence type="ECO:0000255" key="1">
    <source>
        <dbReference type="HAMAP-Rule" id="MF_00750"/>
    </source>
</evidence>
<name>BETA_STAAC</name>
<feature type="chain" id="PRO_0000205595" description="Oxygen-dependent choline dehydrogenase">
    <location>
        <begin position="1"/>
        <end position="569"/>
    </location>
</feature>
<feature type="active site" description="Proton acceptor" evidence="1">
    <location>
        <position position="475"/>
    </location>
</feature>
<feature type="binding site" evidence="1">
    <location>
        <begin position="9"/>
        <end position="38"/>
    </location>
    <ligand>
        <name>FAD</name>
        <dbReference type="ChEBI" id="CHEBI:57692"/>
    </ligand>
</feature>
<sequence>MSNKNKSYDYVIIGGGSAGSVLGNRLSEDKDKEVLVLEAGRSDYFWDLFIQMPAALMFPSGNKFYDWIYSTDEEPHMGGRKVAHARGKVLGGSSSINGMIYQRGNPMDYEGWAEPEGMETWDFAHCLPYFKKLEKTYGAAPYDKFRGHDGPIKLKRGPATNPLFQSFFDAGVEAGYHKTPDVNGFRQEGFGPFDSQVHRGRRMSASRAYLHPAMKRKNLTVETRAFVTEIHYEGRRATGVTYKKNGKLHTIDANEVILSGGAFNTPQLLQLSGIGDSEFLKSKGIEPRVHLPGVGENFEDHLEVYIQHKCKEPVSLQPSLDIKRMPFIGLQWIFTRTGAAASNHFEGGGFVRSNNEVDYPNLMFHFLPIAVRYDGQKAAVAHGYQVHVGPMYSNSRGSLKIKSKDPFEKPSIRFNYLSTEEDKKEWVEAIRVARNILSQKAMDPFNGGEISPGPEVQTDEEILDWVRRDGETALHPSCSAKMGPASDPMAVVDPLTMKVHGMENLRVVDASAMPRTTNGNIHAPVLMLAEKAADIIRGRKPLEPQYIDYYKHGVHDENEGAIEVKPYAK</sequence>
<gene>
    <name evidence="1" type="primary">betA</name>
    <name type="ordered locus">SACOL2627</name>
</gene>
<accession>Q5HCU1</accession>
<organism>
    <name type="scientific">Staphylococcus aureus (strain COL)</name>
    <dbReference type="NCBI Taxonomy" id="93062"/>
    <lineage>
        <taxon>Bacteria</taxon>
        <taxon>Bacillati</taxon>
        <taxon>Bacillota</taxon>
        <taxon>Bacilli</taxon>
        <taxon>Bacillales</taxon>
        <taxon>Staphylococcaceae</taxon>
        <taxon>Staphylococcus</taxon>
    </lineage>
</organism>